<protein>
    <recommendedName>
        <fullName>Asparagine synthetase [glutamine-hydrolyzing] 2</fullName>
        <ecNumber>6.3.5.4</ecNumber>
    </recommendedName>
    <alternativeName>
        <fullName>Glutamine-dependent asparagine synthetase 2</fullName>
    </alternativeName>
</protein>
<accession>P49093</accession>
<feature type="initiator methionine" description="Removed" evidence="1">
    <location>
        <position position="1"/>
    </location>
</feature>
<feature type="chain" id="PRO_0000056923" description="Asparagine synthetase [glutamine-hydrolyzing] 2">
    <location>
        <begin position="2"/>
        <end position="586"/>
    </location>
</feature>
<feature type="domain" description="Glutamine amidotransferase type-2" evidence="2">
    <location>
        <begin position="2"/>
        <end position="185"/>
    </location>
</feature>
<feature type="domain" description="Asparagine synthetase">
    <location>
        <begin position="193"/>
        <end position="516"/>
    </location>
</feature>
<feature type="active site" description="For GATase activity" evidence="1">
    <location>
        <position position="2"/>
    </location>
</feature>
<feature type="binding site" evidence="1">
    <location>
        <begin position="50"/>
        <end position="54"/>
    </location>
    <ligand>
        <name>L-glutamine</name>
        <dbReference type="ChEBI" id="CHEBI:58359"/>
    </ligand>
</feature>
<feature type="binding site" evidence="1">
    <location>
        <begin position="75"/>
        <end position="77"/>
    </location>
    <ligand>
        <name>L-glutamine</name>
        <dbReference type="ChEBI" id="CHEBI:58359"/>
    </ligand>
</feature>
<feature type="binding site" evidence="1">
    <location>
        <position position="98"/>
    </location>
    <ligand>
        <name>L-glutamine</name>
        <dbReference type="ChEBI" id="CHEBI:58359"/>
    </ligand>
</feature>
<feature type="binding site" evidence="1">
    <location>
        <position position="231"/>
    </location>
    <ligand>
        <name>ATP</name>
        <dbReference type="ChEBI" id="CHEBI:30616"/>
    </ligand>
</feature>
<feature type="binding site" evidence="1">
    <location>
        <position position="267"/>
    </location>
    <ligand>
        <name>ATP</name>
        <dbReference type="ChEBI" id="CHEBI:30616"/>
    </ligand>
</feature>
<feature type="binding site" evidence="1">
    <location>
        <begin position="341"/>
        <end position="342"/>
    </location>
    <ligand>
        <name>ATP</name>
        <dbReference type="ChEBI" id="CHEBI:30616"/>
    </ligand>
</feature>
<feature type="site" description="Important for beta-aspartyl-AMP intermediate formation" evidence="1">
    <location>
        <position position="343"/>
    </location>
</feature>
<proteinExistence type="evidence at transcript level"/>
<reference key="1">
    <citation type="journal article" date="1996" name="Plant Mol. Biol.">
        <title>Molecular cloning and characterisation of asparagine synthetase from Lotus japonicus: dynamics of asparagine synthesis in N-sufficient conditions.</title>
        <authorList>
            <person name="Waterhouse R.N."/>
            <person name="Smyth A.J."/>
            <person name="Massoneau A."/>
            <person name="Prosser I.M."/>
            <person name="Clarkson D.T."/>
        </authorList>
    </citation>
    <scope>NUCLEOTIDE SEQUENCE [MRNA]</scope>
    <source>
        <strain>cv. Gifu / B-129</strain>
    </source>
</reference>
<organism>
    <name type="scientific">Lotus japonicus</name>
    <name type="common">Lotus corniculatus var. japonicus</name>
    <dbReference type="NCBI Taxonomy" id="34305"/>
    <lineage>
        <taxon>Eukaryota</taxon>
        <taxon>Viridiplantae</taxon>
        <taxon>Streptophyta</taxon>
        <taxon>Embryophyta</taxon>
        <taxon>Tracheophyta</taxon>
        <taxon>Spermatophyta</taxon>
        <taxon>Magnoliopsida</taxon>
        <taxon>eudicotyledons</taxon>
        <taxon>Gunneridae</taxon>
        <taxon>Pentapetalae</taxon>
        <taxon>rosids</taxon>
        <taxon>fabids</taxon>
        <taxon>Fabales</taxon>
        <taxon>Fabaceae</taxon>
        <taxon>Papilionoideae</taxon>
        <taxon>50 kb inversion clade</taxon>
        <taxon>NPAAA clade</taxon>
        <taxon>Hologalegina</taxon>
        <taxon>robinioid clade</taxon>
        <taxon>Loteae</taxon>
        <taxon>Lotus</taxon>
    </lineage>
</organism>
<keyword id="KW-0028">Amino-acid biosynthesis</keyword>
<keyword id="KW-0061">Asparagine biosynthesis</keyword>
<keyword id="KW-0067">ATP-binding</keyword>
<keyword id="KW-0315">Glutamine amidotransferase</keyword>
<keyword id="KW-0436">Ligase</keyword>
<keyword id="KW-0547">Nucleotide-binding</keyword>
<gene>
    <name type="primary">AS2</name>
</gene>
<name>ASNS2_LOTJA</name>
<comment type="catalytic activity">
    <reaction>
        <text>L-aspartate + L-glutamine + ATP + H2O = L-asparagine + L-glutamate + AMP + diphosphate + H(+)</text>
        <dbReference type="Rhea" id="RHEA:12228"/>
        <dbReference type="ChEBI" id="CHEBI:15377"/>
        <dbReference type="ChEBI" id="CHEBI:15378"/>
        <dbReference type="ChEBI" id="CHEBI:29985"/>
        <dbReference type="ChEBI" id="CHEBI:29991"/>
        <dbReference type="ChEBI" id="CHEBI:30616"/>
        <dbReference type="ChEBI" id="CHEBI:33019"/>
        <dbReference type="ChEBI" id="CHEBI:58048"/>
        <dbReference type="ChEBI" id="CHEBI:58359"/>
        <dbReference type="ChEBI" id="CHEBI:456215"/>
        <dbReference type="EC" id="6.3.5.4"/>
    </reaction>
</comment>
<comment type="pathway">
    <text>Amino-acid biosynthesis; L-asparagine biosynthesis; L-asparagine from L-aspartate (L-Gln route): step 1/1.</text>
</comment>
<dbReference type="EC" id="6.3.5.4"/>
<dbReference type="EMBL" id="X89410">
    <property type="protein sequence ID" value="CAA61590.1"/>
    <property type="molecule type" value="mRNA"/>
</dbReference>
<dbReference type="PIR" id="S69183">
    <property type="entry name" value="S69183"/>
</dbReference>
<dbReference type="SMR" id="P49093"/>
<dbReference type="OrthoDB" id="409189at2759"/>
<dbReference type="UniPathway" id="UPA00134">
    <property type="reaction ID" value="UER00195"/>
</dbReference>
<dbReference type="GO" id="GO:0005829">
    <property type="term" value="C:cytosol"/>
    <property type="evidence" value="ECO:0007669"/>
    <property type="project" value="TreeGrafter"/>
</dbReference>
<dbReference type="GO" id="GO:0004066">
    <property type="term" value="F:asparagine synthase (glutamine-hydrolyzing) activity"/>
    <property type="evidence" value="ECO:0007669"/>
    <property type="project" value="UniProtKB-EC"/>
</dbReference>
<dbReference type="GO" id="GO:0005524">
    <property type="term" value="F:ATP binding"/>
    <property type="evidence" value="ECO:0007669"/>
    <property type="project" value="UniProtKB-KW"/>
</dbReference>
<dbReference type="GO" id="GO:0070981">
    <property type="term" value="P:L-asparagine biosynthetic process"/>
    <property type="evidence" value="ECO:0007669"/>
    <property type="project" value="UniProtKB-UniPathway"/>
</dbReference>
<dbReference type="CDD" id="cd01991">
    <property type="entry name" value="Asn_synthase_B_C"/>
    <property type="match status" value="1"/>
</dbReference>
<dbReference type="CDD" id="cd00712">
    <property type="entry name" value="AsnB"/>
    <property type="match status" value="1"/>
</dbReference>
<dbReference type="FunFam" id="3.40.50.620:FF:000055">
    <property type="entry name" value="Asparagine synthetase [glutamine-hydrolyzing]"/>
    <property type="match status" value="1"/>
</dbReference>
<dbReference type="FunFam" id="3.60.20.10:FF:000024">
    <property type="entry name" value="Asparagine synthetase [glutamine-hydrolyzing]"/>
    <property type="match status" value="1"/>
</dbReference>
<dbReference type="Gene3D" id="3.60.20.10">
    <property type="entry name" value="Glutamine Phosphoribosylpyrophosphate, subunit 1, domain 1"/>
    <property type="match status" value="1"/>
</dbReference>
<dbReference type="Gene3D" id="3.40.50.620">
    <property type="entry name" value="HUPs"/>
    <property type="match status" value="1"/>
</dbReference>
<dbReference type="InterPro" id="IPR006426">
    <property type="entry name" value="Asn_synth_AEB"/>
</dbReference>
<dbReference type="InterPro" id="IPR001962">
    <property type="entry name" value="Asn_synthase"/>
</dbReference>
<dbReference type="InterPro" id="IPR050795">
    <property type="entry name" value="Asn_Synthetase"/>
</dbReference>
<dbReference type="InterPro" id="IPR033738">
    <property type="entry name" value="AsnB_N"/>
</dbReference>
<dbReference type="InterPro" id="IPR017932">
    <property type="entry name" value="GATase_2_dom"/>
</dbReference>
<dbReference type="InterPro" id="IPR029055">
    <property type="entry name" value="Ntn_hydrolases_N"/>
</dbReference>
<dbReference type="InterPro" id="IPR014729">
    <property type="entry name" value="Rossmann-like_a/b/a_fold"/>
</dbReference>
<dbReference type="NCBIfam" id="TIGR01536">
    <property type="entry name" value="asn_synth_AEB"/>
    <property type="match status" value="1"/>
</dbReference>
<dbReference type="NCBIfam" id="NF006949">
    <property type="entry name" value="PRK09431.1"/>
    <property type="match status" value="1"/>
</dbReference>
<dbReference type="PANTHER" id="PTHR11772">
    <property type="entry name" value="ASPARAGINE SYNTHETASE"/>
    <property type="match status" value="1"/>
</dbReference>
<dbReference type="PANTHER" id="PTHR11772:SF48">
    <property type="entry name" value="ASPARAGINE SYNTHETASE [GLUTAMINE-HYDROLYZING] 1"/>
    <property type="match status" value="1"/>
</dbReference>
<dbReference type="Pfam" id="PF00733">
    <property type="entry name" value="Asn_synthase"/>
    <property type="match status" value="1"/>
</dbReference>
<dbReference type="Pfam" id="PF13537">
    <property type="entry name" value="GATase_7"/>
    <property type="match status" value="1"/>
</dbReference>
<dbReference type="PIRSF" id="PIRSF001589">
    <property type="entry name" value="Asn_synthetase_glu-h"/>
    <property type="match status" value="1"/>
</dbReference>
<dbReference type="SUPFAM" id="SSF52402">
    <property type="entry name" value="Adenine nucleotide alpha hydrolases-like"/>
    <property type="match status" value="1"/>
</dbReference>
<dbReference type="SUPFAM" id="SSF56235">
    <property type="entry name" value="N-terminal nucleophile aminohydrolases (Ntn hydrolases)"/>
    <property type="match status" value="1"/>
</dbReference>
<dbReference type="PROSITE" id="PS51278">
    <property type="entry name" value="GATASE_TYPE_2"/>
    <property type="match status" value="1"/>
</dbReference>
<sequence length="586" mass="65970">MCGILAVLGCSDDSQAKRVRVLELSRRLKHRGPDWSGLHQHGDNFLAHQRLAIVDPASGDQPLFNEDQSIIVTVNGEIFNHEELRKQLPNHKFRTGCDCDVIAHLYEEHGENFVDMLDGIFSFVLLDTRDNSFLVARDAIGVTSLYIGYGLDGSVWIASELKGLNDDCEHFELFPPGHLYSSKEKEFRRWYNPPWFSEAIPSAPYDPLALRQAFEKAIIKRLMTDVPFGVLLSGGLDSSLVASVTARYLADTKAAKQWGSKLHSFCVGLEGAPDLKAAREVADYIGTVHHEFQYTIQDGIDAIEDVIYHVETYDVTTIRAGTPMFLMSRKIKSLGVKMVLSGEGSDEIFAGYLYFHKAPNKEELHQETCSKIKALHKYDCLRANKSTYAWGLEARVPFLDKKFIDVAMGIDPENKMIKRDEGRIEKWVLRKAFDDEENPYLPKHILYRQKEQFSDGVGYGWIDGLKDHAAKHVTDKMMLNASNIYPFNTPNTKEAYYYRMIFERFFPQNSARLSVPGGASIACSTEKAIEWDAAWSNNLDPSGRAALGVHDSAYDDQLNKSVSKGVEPEKIIPKMEVSPLGVAILS</sequence>
<evidence type="ECO:0000250" key="1"/>
<evidence type="ECO:0000255" key="2">
    <source>
        <dbReference type="PROSITE-ProRule" id="PRU00609"/>
    </source>
</evidence>